<proteinExistence type="inferred from homology"/>
<reference key="1">
    <citation type="journal article" date="2006" name="J. Bacteriol.">
        <title>Pathogenomic sequence analysis of Bacillus cereus and Bacillus thuringiensis isolates closely related to Bacillus anthracis.</title>
        <authorList>
            <person name="Han C.S."/>
            <person name="Xie G."/>
            <person name="Challacombe J.F."/>
            <person name="Altherr M.R."/>
            <person name="Bhotika S.S."/>
            <person name="Bruce D."/>
            <person name="Campbell C.S."/>
            <person name="Campbell M.L."/>
            <person name="Chen J."/>
            <person name="Chertkov O."/>
            <person name="Cleland C."/>
            <person name="Dimitrijevic M."/>
            <person name="Doggett N.A."/>
            <person name="Fawcett J.J."/>
            <person name="Glavina T."/>
            <person name="Goodwin L.A."/>
            <person name="Hill K.K."/>
            <person name="Hitchcock P."/>
            <person name="Jackson P.J."/>
            <person name="Keim P."/>
            <person name="Kewalramani A.R."/>
            <person name="Longmire J."/>
            <person name="Lucas S."/>
            <person name="Malfatti S."/>
            <person name="McMurry K."/>
            <person name="Meincke L.J."/>
            <person name="Misra M."/>
            <person name="Moseman B.L."/>
            <person name="Mundt M."/>
            <person name="Munk A.C."/>
            <person name="Okinaka R.T."/>
            <person name="Parson-Quintana B."/>
            <person name="Reilly L.P."/>
            <person name="Richardson P."/>
            <person name="Robinson D.L."/>
            <person name="Rubin E."/>
            <person name="Saunders E."/>
            <person name="Tapia R."/>
            <person name="Tesmer J.G."/>
            <person name="Thayer N."/>
            <person name="Thompson L.S."/>
            <person name="Tice H."/>
            <person name="Ticknor L.O."/>
            <person name="Wills P.L."/>
            <person name="Brettin T.S."/>
            <person name="Gilna P."/>
        </authorList>
    </citation>
    <scope>NUCLEOTIDE SEQUENCE [LARGE SCALE GENOMIC DNA]</scope>
    <source>
        <strain>ZK / E33L</strain>
    </source>
</reference>
<gene>
    <name evidence="1" type="primary">rplK</name>
    <name type="ordered locus">BCE33L0091</name>
</gene>
<name>RL11_BACCZ</name>
<accession>Q63HA3</accession>
<comment type="function">
    <text evidence="1">Forms part of the ribosomal stalk which helps the ribosome interact with GTP-bound translation factors.</text>
</comment>
<comment type="subunit">
    <text evidence="1">Part of the ribosomal stalk of the 50S ribosomal subunit. Interacts with L10 and the large rRNA to form the base of the stalk. L10 forms an elongated spine to which L12 dimers bind in a sequential fashion forming a multimeric L10(L12)X complex.</text>
</comment>
<comment type="PTM">
    <text evidence="1">One or more lysine residues are methylated.</text>
</comment>
<comment type="similarity">
    <text evidence="1">Belongs to the universal ribosomal protein uL11 family.</text>
</comment>
<comment type="sequence caution" evidence="2">
    <conflict type="erroneous initiation">
        <sequence resource="EMBL-CDS" id="AAU20141"/>
    </conflict>
</comment>
<feature type="chain" id="PRO_0000258120" description="Large ribosomal subunit protein uL11">
    <location>
        <begin position="1"/>
        <end position="141"/>
    </location>
</feature>
<organism>
    <name type="scientific">Bacillus cereus (strain ZK / E33L)</name>
    <dbReference type="NCBI Taxonomy" id="288681"/>
    <lineage>
        <taxon>Bacteria</taxon>
        <taxon>Bacillati</taxon>
        <taxon>Bacillota</taxon>
        <taxon>Bacilli</taxon>
        <taxon>Bacillales</taxon>
        <taxon>Bacillaceae</taxon>
        <taxon>Bacillus</taxon>
        <taxon>Bacillus cereus group</taxon>
    </lineage>
</organism>
<protein>
    <recommendedName>
        <fullName evidence="1">Large ribosomal subunit protein uL11</fullName>
    </recommendedName>
    <alternativeName>
        <fullName evidence="2">50S ribosomal protein L11</fullName>
    </alternativeName>
</protein>
<dbReference type="EMBL" id="CP000001">
    <property type="protein sequence ID" value="AAU20141.1"/>
    <property type="status" value="ALT_INIT"/>
    <property type="molecule type" value="Genomic_DNA"/>
</dbReference>
<dbReference type="RefSeq" id="WP_001085872.1">
    <property type="nucleotide sequence ID" value="NZ_CP009968.1"/>
</dbReference>
<dbReference type="SMR" id="Q63HA3"/>
<dbReference type="GeneID" id="93010956"/>
<dbReference type="KEGG" id="bcz:BCE33L0091"/>
<dbReference type="PATRIC" id="fig|288681.22.peg.60"/>
<dbReference type="Proteomes" id="UP000002612">
    <property type="component" value="Chromosome"/>
</dbReference>
<dbReference type="GO" id="GO:0022625">
    <property type="term" value="C:cytosolic large ribosomal subunit"/>
    <property type="evidence" value="ECO:0007669"/>
    <property type="project" value="TreeGrafter"/>
</dbReference>
<dbReference type="GO" id="GO:0070180">
    <property type="term" value="F:large ribosomal subunit rRNA binding"/>
    <property type="evidence" value="ECO:0007669"/>
    <property type="project" value="UniProtKB-UniRule"/>
</dbReference>
<dbReference type="GO" id="GO:0003735">
    <property type="term" value="F:structural constituent of ribosome"/>
    <property type="evidence" value="ECO:0007669"/>
    <property type="project" value="InterPro"/>
</dbReference>
<dbReference type="GO" id="GO:0006412">
    <property type="term" value="P:translation"/>
    <property type="evidence" value="ECO:0007669"/>
    <property type="project" value="UniProtKB-UniRule"/>
</dbReference>
<dbReference type="CDD" id="cd00349">
    <property type="entry name" value="Ribosomal_L11"/>
    <property type="match status" value="1"/>
</dbReference>
<dbReference type="FunFam" id="1.10.10.250:FF:000001">
    <property type="entry name" value="50S ribosomal protein L11"/>
    <property type="match status" value="1"/>
</dbReference>
<dbReference type="FunFam" id="3.30.1550.10:FF:000001">
    <property type="entry name" value="50S ribosomal protein L11"/>
    <property type="match status" value="1"/>
</dbReference>
<dbReference type="Gene3D" id="1.10.10.250">
    <property type="entry name" value="Ribosomal protein L11, C-terminal domain"/>
    <property type="match status" value="1"/>
</dbReference>
<dbReference type="Gene3D" id="3.30.1550.10">
    <property type="entry name" value="Ribosomal protein L11/L12, N-terminal domain"/>
    <property type="match status" value="1"/>
</dbReference>
<dbReference type="HAMAP" id="MF_00736">
    <property type="entry name" value="Ribosomal_uL11"/>
    <property type="match status" value="1"/>
</dbReference>
<dbReference type="InterPro" id="IPR000911">
    <property type="entry name" value="Ribosomal_uL11"/>
</dbReference>
<dbReference type="InterPro" id="IPR006519">
    <property type="entry name" value="Ribosomal_uL11_bac-typ"/>
</dbReference>
<dbReference type="InterPro" id="IPR020783">
    <property type="entry name" value="Ribosomal_uL11_C"/>
</dbReference>
<dbReference type="InterPro" id="IPR036769">
    <property type="entry name" value="Ribosomal_uL11_C_sf"/>
</dbReference>
<dbReference type="InterPro" id="IPR020785">
    <property type="entry name" value="Ribosomal_uL11_CS"/>
</dbReference>
<dbReference type="InterPro" id="IPR020784">
    <property type="entry name" value="Ribosomal_uL11_N"/>
</dbReference>
<dbReference type="InterPro" id="IPR036796">
    <property type="entry name" value="Ribosomal_uL11_N_sf"/>
</dbReference>
<dbReference type="NCBIfam" id="TIGR01632">
    <property type="entry name" value="L11_bact"/>
    <property type="match status" value="1"/>
</dbReference>
<dbReference type="PANTHER" id="PTHR11661">
    <property type="entry name" value="60S RIBOSOMAL PROTEIN L12"/>
    <property type="match status" value="1"/>
</dbReference>
<dbReference type="PANTHER" id="PTHR11661:SF1">
    <property type="entry name" value="LARGE RIBOSOMAL SUBUNIT PROTEIN UL11M"/>
    <property type="match status" value="1"/>
</dbReference>
<dbReference type="Pfam" id="PF00298">
    <property type="entry name" value="Ribosomal_L11"/>
    <property type="match status" value="1"/>
</dbReference>
<dbReference type="Pfam" id="PF03946">
    <property type="entry name" value="Ribosomal_L11_N"/>
    <property type="match status" value="1"/>
</dbReference>
<dbReference type="SMART" id="SM00649">
    <property type="entry name" value="RL11"/>
    <property type="match status" value="1"/>
</dbReference>
<dbReference type="SUPFAM" id="SSF54747">
    <property type="entry name" value="Ribosomal L11/L12e N-terminal domain"/>
    <property type="match status" value="1"/>
</dbReference>
<dbReference type="SUPFAM" id="SSF46906">
    <property type="entry name" value="Ribosomal protein L11, C-terminal domain"/>
    <property type="match status" value="1"/>
</dbReference>
<dbReference type="PROSITE" id="PS00359">
    <property type="entry name" value="RIBOSOMAL_L11"/>
    <property type="match status" value="1"/>
</dbReference>
<sequence length="141" mass="14976">MAKKVIKMVKLQIPAGKANPAPPVGPALGQAGVNIMGFCKEFNARTADQAGLIIPVEITVFEDRSFTFITKTPPAAVLLKKVAGIESGSGEPNRNKVATVKRDKVREIAETKMPDLNAASVEAAMRMVEGTARSMGIVIED</sequence>
<keyword id="KW-0488">Methylation</keyword>
<keyword id="KW-0687">Ribonucleoprotein</keyword>
<keyword id="KW-0689">Ribosomal protein</keyword>
<keyword id="KW-0694">RNA-binding</keyword>
<keyword id="KW-0699">rRNA-binding</keyword>
<evidence type="ECO:0000255" key="1">
    <source>
        <dbReference type="HAMAP-Rule" id="MF_00736"/>
    </source>
</evidence>
<evidence type="ECO:0000305" key="2"/>